<evidence type="ECO:0000250" key="1"/>
<evidence type="ECO:0000255" key="2">
    <source>
        <dbReference type="PROSITE-ProRule" id="PRU00176"/>
    </source>
</evidence>
<evidence type="ECO:0000256" key="3">
    <source>
        <dbReference type="SAM" id="MobiDB-lite"/>
    </source>
</evidence>
<evidence type="ECO:0000305" key="4"/>
<protein>
    <recommendedName>
        <fullName>CUGBP Elav-like family member 4</fullName>
        <shortName>CELF-4</shortName>
    </recommendedName>
    <alternativeName>
        <fullName>Bruno-like protein 4</fullName>
    </alternativeName>
    <alternativeName>
        <fullName>CUG-BP- and ETR-3-like factor 4</fullName>
    </alternativeName>
    <alternativeName>
        <fullName>RNA-binding protein BRUNOL-4</fullName>
    </alternativeName>
</protein>
<name>CELF4_XENTR</name>
<reference key="1">
    <citation type="submission" date="2006-08" db="EMBL/GenBank/DDBJ databases">
        <authorList>
            <consortium name="NIH - Xenopus Gene Collection (XGC) project"/>
        </authorList>
    </citation>
    <scope>NUCLEOTIDE SEQUENCE [LARGE SCALE MRNA]</scope>
    <source>
        <tissue>Brain</tissue>
    </source>
</reference>
<feature type="chain" id="PRO_0000295226" description="CUGBP Elav-like family member 4">
    <location>
        <begin position="1"/>
        <end position="424"/>
    </location>
</feature>
<feature type="domain" description="RRM 1" evidence="2">
    <location>
        <begin position="47"/>
        <end position="128"/>
    </location>
</feature>
<feature type="domain" description="RRM 2" evidence="2">
    <location>
        <begin position="342"/>
        <end position="417"/>
    </location>
</feature>
<feature type="region of interest" description="Disordered" evidence="3">
    <location>
        <begin position="8"/>
        <end position="27"/>
    </location>
</feature>
<feature type="compositionally biased region" description="Polar residues" evidence="3">
    <location>
        <begin position="9"/>
        <end position="24"/>
    </location>
</feature>
<keyword id="KW-0963">Cytoplasm</keyword>
<keyword id="KW-0507">mRNA processing</keyword>
<keyword id="KW-0539">Nucleus</keyword>
<keyword id="KW-1185">Reference proteome</keyword>
<keyword id="KW-0677">Repeat</keyword>
<keyword id="KW-0694">RNA-binding</keyword>
<organism>
    <name type="scientific">Xenopus tropicalis</name>
    <name type="common">Western clawed frog</name>
    <name type="synonym">Silurana tropicalis</name>
    <dbReference type="NCBI Taxonomy" id="8364"/>
    <lineage>
        <taxon>Eukaryota</taxon>
        <taxon>Metazoa</taxon>
        <taxon>Chordata</taxon>
        <taxon>Craniata</taxon>
        <taxon>Vertebrata</taxon>
        <taxon>Euteleostomi</taxon>
        <taxon>Amphibia</taxon>
        <taxon>Batrachia</taxon>
        <taxon>Anura</taxon>
        <taxon>Pipoidea</taxon>
        <taxon>Pipidae</taxon>
        <taxon>Xenopodinae</taxon>
        <taxon>Xenopus</taxon>
        <taxon>Silurana</taxon>
    </lineage>
</organism>
<gene>
    <name type="primary">celf4</name>
    <name type="synonym">brunol4</name>
</gene>
<accession>Q0V9L3</accession>
<comment type="function">
    <text evidence="1">RNA-binding protein that may be implicated in the regulation of pre-mRNA alternative splicing.</text>
</comment>
<comment type="subcellular location">
    <subcellularLocation>
        <location evidence="1">Nucleus</location>
    </subcellularLocation>
    <subcellularLocation>
        <location evidence="1">Cytoplasm</location>
    </subcellularLocation>
</comment>
<comment type="similarity">
    <text evidence="4">Belongs to the CELF/BRUNOL family.</text>
</comment>
<sequence length="424" mass="45250">MYIKMATVANGQPDNSSLSSNPTGHMNGLTHSPGGAATIPMKDHDAIKLFIGQIPRNLDEKDLKPLFEEFGKIYELTVLKDRFTGMHKGCAFLTYCERESALKAQSALHEQKTLPGMNRPIQVKPADSESRGGCAFVKYSSHAEAQAAINALHGSQTMPGASSSLVVKFADTDKERTMRRMQQMAGQMGMFNPMAIQFGAYGAYAQALMQQQAAIMASVAQGGYLNPMAAFAAAQMQQMAALNMNGLAAAPMTPTSGGSTPPGITAPAVPSIPSPIGVNGFTGIPAQANGQPAAEAVFANGIHPYPAQSPTAADPLQQAYAGVQQYAAAYPAAYGQISQAFPQPPPMIPQQQREGPEGCNLFIYHLPQEFGDAELMQMFLPFGFVSFDNPASAQAAIQAMNGFQIGMKRLKVQLKRPKDANRPY</sequence>
<dbReference type="EMBL" id="BC121490">
    <property type="protein sequence ID" value="AAI21491.1"/>
    <property type="molecule type" value="mRNA"/>
</dbReference>
<dbReference type="RefSeq" id="NP_001072378.1">
    <property type="nucleotide sequence ID" value="NM_001078910.1"/>
</dbReference>
<dbReference type="SMR" id="Q0V9L3"/>
<dbReference type="FunCoup" id="Q0V9L3">
    <property type="interactions" value="1576"/>
</dbReference>
<dbReference type="DNASU" id="779831"/>
<dbReference type="GeneID" id="779831"/>
<dbReference type="KEGG" id="xtr:779831"/>
<dbReference type="AGR" id="Xenbase:XB-GENE-5873699"/>
<dbReference type="CTD" id="56853"/>
<dbReference type="Xenbase" id="XB-GENE-5873699">
    <property type="gene designation" value="celf4"/>
</dbReference>
<dbReference type="InParanoid" id="Q0V9L3"/>
<dbReference type="OrthoDB" id="410044at2759"/>
<dbReference type="Proteomes" id="UP000008143">
    <property type="component" value="Chromosome 1"/>
</dbReference>
<dbReference type="Bgee" id="ENSXETG00000020486">
    <property type="expression patterns" value="Expressed in brain and 6 other cell types or tissues"/>
</dbReference>
<dbReference type="GO" id="GO:0005737">
    <property type="term" value="C:cytoplasm"/>
    <property type="evidence" value="ECO:0007669"/>
    <property type="project" value="UniProtKB-SubCell"/>
</dbReference>
<dbReference type="GO" id="GO:0005634">
    <property type="term" value="C:nucleus"/>
    <property type="evidence" value="ECO:0007669"/>
    <property type="project" value="UniProtKB-SubCell"/>
</dbReference>
<dbReference type="GO" id="GO:0003723">
    <property type="term" value="F:RNA binding"/>
    <property type="evidence" value="ECO:0007669"/>
    <property type="project" value="UniProtKB-KW"/>
</dbReference>
<dbReference type="GO" id="GO:0006397">
    <property type="term" value="P:mRNA processing"/>
    <property type="evidence" value="ECO:0007669"/>
    <property type="project" value="UniProtKB-KW"/>
</dbReference>
<dbReference type="GO" id="GO:0048026">
    <property type="term" value="P:positive regulation of mRNA splicing, via spliceosome"/>
    <property type="evidence" value="ECO:0000250"/>
    <property type="project" value="UniProtKB"/>
</dbReference>
<dbReference type="CDD" id="cd12632">
    <property type="entry name" value="RRM1_CELF3_4_5_6"/>
    <property type="match status" value="1"/>
</dbReference>
<dbReference type="FunFam" id="3.30.70.330:FF:000010">
    <property type="entry name" value="CUGBP Elav-like family member 4 isoform 3"/>
    <property type="match status" value="1"/>
</dbReference>
<dbReference type="Gene3D" id="3.30.70.330">
    <property type="match status" value="3"/>
</dbReference>
<dbReference type="InterPro" id="IPR034648">
    <property type="entry name" value="CELF3/4/5/6_RRM1"/>
</dbReference>
<dbReference type="InterPro" id="IPR012677">
    <property type="entry name" value="Nucleotide-bd_a/b_plait_sf"/>
</dbReference>
<dbReference type="InterPro" id="IPR035979">
    <property type="entry name" value="RBD_domain_sf"/>
</dbReference>
<dbReference type="InterPro" id="IPR000504">
    <property type="entry name" value="RRM_dom"/>
</dbReference>
<dbReference type="PANTHER" id="PTHR24012">
    <property type="entry name" value="RNA BINDING PROTEIN"/>
    <property type="match status" value="1"/>
</dbReference>
<dbReference type="Pfam" id="PF00076">
    <property type="entry name" value="RRM_1"/>
    <property type="match status" value="2"/>
</dbReference>
<dbReference type="SMART" id="SM00360">
    <property type="entry name" value="RRM"/>
    <property type="match status" value="2"/>
</dbReference>
<dbReference type="SUPFAM" id="SSF54928">
    <property type="entry name" value="RNA-binding domain, RBD"/>
    <property type="match status" value="2"/>
</dbReference>
<dbReference type="PROSITE" id="PS50102">
    <property type="entry name" value="RRM"/>
    <property type="match status" value="2"/>
</dbReference>
<proteinExistence type="evidence at transcript level"/>